<gene>
    <name evidence="1" type="primary">hemL</name>
    <name type="ordered locus">Mlab_0525</name>
</gene>
<name>GSA_METLZ</name>
<dbReference type="EC" id="5.4.3.8" evidence="1"/>
<dbReference type="EMBL" id="CP000559">
    <property type="protein sequence ID" value="ABN06699.1"/>
    <property type="molecule type" value="Genomic_DNA"/>
</dbReference>
<dbReference type="RefSeq" id="WP_011832900.1">
    <property type="nucleotide sequence ID" value="NC_008942.1"/>
</dbReference>
<dbReference type="SMR" id="A2SQU3"/>
<dbReference type="STRING" id="410358.Mlab_0525"/>
<dbReference type="GeneID" id="4795104"/>
<dbReference type="KEGG" id="mla:Mlab_0525"/>
<dbReference type="eggNOG" id="arCOG00918">
    <property type="taxonomic scope" value="Archaea"/>
</dbReference>
<dbReference type="HOGENOM" id="CLU_016922_1_5_2"/>
<dbReference type="OrthoDB" id="6524at2157"/>
<dbReference type="UniPathway" id="UPA00251">
    <property type="reaction ID" value="UER00317"/>
</dbReference>
<dbReference type="Proteomes" id="UP000000365">
    <property type="component" value="Chromosome"/>
</dbReference>
<dbReference type="GO" id="GO:0005737">
    <property type="term" value="C:cytoplasm"/>
    <property type="evidence" value="ECO:0007669"/>
    <property type="project" value="UniProtKB-SubCell"/>
</dbReference>
<dbReference type="GO" id="GO:0042286">
    <property type="term" value="F:glutamate-1-semialdehyde 2,1-aminomutase activity"/>
    <property type="evidence" value="ECO:0007669"/>
    <property type="project" value="UniProtKB-UniRule"/>
</dbReference>
<dbReference type="GO" id="GO:0030170">
    <property type="term" value="F:pyridoxal phosphate binding"/>
    <property type="evidence" value="ECO:0007669"/>
    <property type="project" value="InterPro"/>
</dbReference>
<dbReference type="GO" id="GO:0008483">
    <property type="term" value="F:transaminase activity"/>
    <property type="evidence" value="ECO:0007669"/>
    <property type="project" value="InterPro"/>
</dbReference>
<dbReference type="GO" id="GO:0006782">
    <property type="term" value="P:protoporphyrinogen IX biosynthetic process"/>
    <property type="evidence" value="ECO:0007669"/>
    <property type="project" value="UniProtKB-UniRule"/>
</dbReference>
<dbReference type="CDD" id="cd00610">
    <property type="entry name" value="OAT_like"/>
    <property type="match status" value="1"/>
</dbReference>
<dbReference type="FunFam" id="3.40.640.10:FF:000021">
    <property type="entry name" value="Glutamate-1-semialdehyde 2,1-aminomutase"/>
    <property type="match status" value="1"/>
</dbReference>
<dbReference type="Gene3D" id="3.90.1150.10">
    <property type="entry name" value="Aspartate Aminotransferase, domain 1"/>
    <property type="match status" value="1"/>
</dbReference>
<dbReference type="Gene3D" id="3.40.640.10">
    <property type="entry name" value="Type I PLP-dependent aspartate aminotransferase-like (Major domain)"/>
    <property type="match status" value="1"/>
</dbReference>
<dbReference type="HAMAP" id="MF_00375">
    <property type="entry name" value="HemL_aminotrans_3"/>
    <property type="match status" value="1"/>
</dbReference>
<dbReference type="InterPro" id="IPR004639">
    <property type="entry name" value="4pyrrol_synth_GluAld_NH2Trfase"/>
</dbReference>
<dbReference type="InterPro" id="IPR005814">
    <property type="entry name" value="Aminotrans_3"/>
</dbReference>
<dbReference type="InterPro" id="IPR049704">
    <property type="entry name" value="Aminotrans_3_PPA_site"/>
</dbReference>
<dbReference type="InterPro" id="IPR015424">
    <property type="entry name" value="PyrdxlP-dep_Trfase"/>
</dbReference>
<dbReference type="InterPro" id="IPR015421">
    <property type="entry name" value="PyrdxlP-dep_Trfase_major"/>
</dbReference>
<dbReference type="InterPro" id="IPR015422">
    <property type="entry name" value="PyrdxlP-dep_Trfase_small"/>
</dbReference>
<dbReference type="NCBIfam" id="NF000818">
    <property type="entry name" value="PRK00062.1"/>
    <property type="match status" value="1"/>
</dbReference>
<dbReference type="PANTHER" id="PTHR43713">
    <property type="entry name" value="GLUTAMATE-1-SEMIALDEHYDE 2,1-AMINOMUTASE"/>
    <property type="match status" value="1"/>
</dbReference>
<dbReference type="PANTHER" id="PTHR43713:SF3">
    <property type="entry name" value="GLUTAMATE-1-SEMIALDEHYDE 2,1-AMINOMUTASE 1, CHLOROPLASTIC-RELATED"/>
    <property type="match status" value="1"/>
</dbReference>
<dbReference type="Pfam" id="PF00202">
    <property type="entry name" value="Aminotran_3"/>
    <property type="match status" value="1"/>
</dbReference>
<dbReference type="SUPFAM" id="SSF53383">
    <property type="entry name" value="PLP-dependent transferases"/>
    <property type="match status" value="1"/>
</dbReference>
<dbReference type="PROSITE" id="PS00600">
    <property type="entry name" value="AA_TRANSFER_CLASS_3"/>
    <property type="match status" value="1"/>
</dbReference>
<comment type="catalytic activity">
    <reaction evidence="1">
        <text>(S)-4-amino-5-oxopentanoate = 5-aminolevulinate</text>
        <dbReference type="Rhea" id="RHEA:14265"/>
        <dbReference type="ChEBI" id="CHEBI:57501"/>
        <dbReference type="ChEBI" id="CHEBI:356416"/>
        <dbReference type="EC" id="5.4.3.8"/>
    </reaction>
</comment>
<comment type="cofactor">
    <cofactor evidence="1">
        <name>pyridoxal 5'-phosphate</name>
        <dbReference type="ChEBI" id="CHEBI:597326"/>
    </cofactor>
</comment>
<comment type="pathway">
    <text evidence="1">Porphyrin-containing compound metabolism; protoporphyrin-IX biosynthesis; 5-aminolevulinate from L-glutamyl-tRNA(Glu): step 2/2.</text>
</comment>
<comment type="subcellular location">
    <subcellularLocation>
        <location evidence="1">Cytoplasm</location>
    </subcellularLocation>
</comment>
<comment type="similarity">
    <text evidence="1">Belongs to the class-III pyridoxal-phosphate-dependent aminotransferase family. HemL subfamily.</text>
</comment>
<protein>
    <recommendedName>
        <fullName evidence="1">Glutamate-1-semialdehyde 2,1-aminomutase</fullName>
        <shortName evidence="1">GSA</shortName>
        <ecNumber evidence="1">5.4.3.8</ecNumber>
    </recommendedName>
    <alternativeName>
        <fullName evidence="1">Glutamate-1-semialdehyde aminotransferase</fullName>
        <shortName evidence="1">GSA-AT</shortName>
    </alternativeName>
</protein>
<proteinExistence type="inferred from homology"/>
<keyword id="KW-0963">Cytoplasm</keyword>
<keyword id="KW-0413">Isomerase</keyword>
<keyword id="KW-0627">Porphyrin biosynthesis</keyword>
<keyword id="KW-0663">Pyridoxal phosphate</keyword>
<keyword id="KW-1185">Reference proteome</keyword>
<organism>
    <name type="scientific">Methanocorpusculum labreanum (strain ATCC 43576 / DSM 4855 / Z)</name>
    <dbReference type="NCBI Taxonomy" id="410358"/>
    <lineage>
        <taxon>Archaea</taxon>
        <taxon>Methanobacteriati</taxon>
        <taxon>Methanobacteriota</taxon>
        <taxon>Stenosarchaea group</taxon>
        <taxon>Methanomicrobia</taxon>
        <taxon>Methanomicrobiales</taxon>
        <taxon>Methanocorpusculaceae</taxon>
        <taxon>Methanocorpusculum</taxon>
    </lineage>
</organism>
<accession>A2SQU3</accession>
<reference key="1">
    <citation type="journal article" date="2009" name="Stand. Genomic Sci.">
        <title>Complete genome sequence of Methanocorpusculum labreanum type strain Z.</title>
        <authorList>
            <person name="Anderson I.J."/>
            <person name="Sieprawska-Lupa M."/>
            <person name="Goltsman E."/>
            <person name="Lapidus A."/>
            <person name="Copeland A."/>
            <person name="Glavina Del Rio T."/>
            <person name="Tice H."/>
            <person name="Dalin E."/>
            <person name="Barry K."/>
            <person name="Pitluck S."/>
            <person name="Hauser L."/>
            <person name="Land M."/>
            <person name="Lucas S."/>
            <person name="Richardson P."/>
            <person name="Whitman W.B."/>
            <person name="Kyrpides N.C."/>
        </authorList>
    </citation>
    <scope>NUCLEOTIDE SEQUENCE [LARGE SCALE GENOMIC DNA]</scope>
    <source>
        <strain>ATCC 43576 / DSM 4855 / Z</strain>
    </source>
</reference>
<feature type="chain" id="PRO_0000382404" description="Glutamate-1-semialdehyde 2,1-aminomutase">
    <location>
        <begin position="1"/>
        <end position="412"/>
    </location>
</feature>
<feature type="modified residue" description="N6-(pyridoxal phosphate)lysine" evidence="1">
    <location>
        <position position="260"/>
    </location>
</feature>
<sequence>MKSEELFTTAKTCLPGGVSSPVRAIKPYPFYVKSARGATLETEDGESLVDCCMGYGPLLLGHAHPAIQKAIEAQLDAGWLYGTPTKLEIDLAQRICRDHPSIEMLRCVSTGLEATLAAIRLARGFTGKCGIVKLEGGFHGAHDAVLIAAGSGATTHGTPDSLGVPPSFAAQTRQVPYNDPEALEELLSKDKEIAAFILEPVMGNVGPVLPDDGYLSAVREITKAHDVLLIFDEVITGYRVGIGGAQKKYGIKPDLTTLGKITGGGLPIGVFGGRRDIMELVSPSGGVYNAGTFNGNPLSMAAGIATNVYLHENESLYAELDEKTRAIEESLPAKASGSFVRLGSLFKYFFRSTAPRNYLEAKESDTAAFRVFFEKALKDGVFIPPSQFETNFLSTAHDASSMEKIISVYQHV</sequence>
<evidence type="ECO:0000255" key="1">
    <source>
        <dbReference type="HAMAP-Rule" id="MF_00375"/>
    </source>
</evidence>